<proteinExistence type="inferred from homology"/>
<feature type="chain" id="PRO_1000010616" description="Peptidyl-tRNA hydrolase">
    <location>
        <begin position="1"/>
        <end position="191"/>
    </location>
</feature>
<feature type="active site" description="Proton acceptor" evidence="1">
    <location>
        <position position="22"/>
    </location>
</feature>
<feature type="binding site" evidence="1">
    <location>
        <position position="17"/>
    </location>
    <ligand>
        <name>tRNA</name>
        <dbReference type="ChEBI" id="CHEBI:17843"/>
    </ligand>
</feature>
<feature type="binding site" evidence="1">
    <location>
        <position position="68"/>
    </location>
    <ligand>
        <name>tRNA</name>
        <dbReference type="ChEBI" id="CHEBI:17843"/>
    </ligand>
</feature>
<feature type="binding site" evidence="1">
    <location>
        <position position="70"/>
    </location>
    <ligand>
        <name>tRNA</name>
        <dbReference type="ChEBI" id="CHEBI:17843"/>
    </ligand>
</feature>
<feature type="binding site" evidence="1">
    <location>
        <position position="116"/>
    </location>
    <ligand>
        <name>tRNA</name>
        <dbReference type="ChEBI" id="CHEBI:17843"/>
    </ligand>
</feature>
<feature type="site" description="Discriminates between blocked and unblocked aminoacyl-tRNA" evidence="1">
    <location>
        <position position="12"/>
    </location>
</feature>
<feature type="site" description="Stabilizes the basic form of H active site to accept a proton" evidence="1">
    <location>
        <position position="95"/>
    </location>
</feature>
<accession>A5U157</accession>
<sequence>MAEPLLVVGLGNPGANYARTRHNLGFVVADLLAARLGAKFKAHKRSGAEVATGRSAGRSLVLAKPRCYMNESGRQIGPLAKFYSVAPANIIVIHDDLDLEFGRIRLKIGGGEGGHNGLRSVVAALGTKDFQRVRIGIGRPPGRKDPAAFVLENFTPAERAEVPTICEQAADATELLIEQGMEPAQNRVHAW</sequence>
<dbReference type="EC" id="3.1.1.29" evidence="1"/>
<dbReference type="EMBL" id="CP000611">
    <property type="protein sequence ID" value="ABQ72757.1"/>
    <property type="molecule type" value="Genomic_DNA"/>
</dbReference>
<dbReference type="RefSeq" id="WP_003405251.1">
    <property type="nucleotide sequence ID" value="NZ_CP016972.1"/>
</dbReference>
<dbReference type="BMRB" id="A5U157"/>
<dbReference type="SMR" id="A5U157"/>
<dbReference type="GeneID" id="45424985"/>
<dbReference type="KEGG" id="mra:MRA_1022"/>
<dbReference type="eggNOG" id="COG0193">
    <property type="taxonomic scope" value="Bacteria"/>
</dbReference>
<dbReference type="HOGENOM" id="CLU_062456_2_2_11"/>
<dbReference type="Proteomes" id="UP000001988">
    <property type="component" value="Chromosome"/>
</dbReference>
<dbReference type="GO" id="GO:0005737">
    <property type="term" value="C:cytoplasm"/>
    <property type="evidence" value="ECO:0007669"/>
    <property type="project" value="UniProtKB-SubCell"/>
</dbReference>
<dbReference type="GO" id="GO:0004045">
    <property type="term" value="F:peptidyl-tRNA hydrolase activity"/>
    <property type="evidence" value="ECO:0007669"/>
    <property type="project" value="UniProtKB-UniRule"/>
</dbReference>
<dbReference type="GO" id="GO:0000049">
    <property type="term" value="F:tRNA binding"/>
    <property type="evidence" value="ECO:0007669"/>
    <property type="project" value="UniProtKB-UniRule"/>
</dbReference>
<dbReference type="GO" id="GO:0006515">
    <property type="term" value="P:protein quality control for misfolded or incompletely synthesized proteins"/>
    <property type="evidence" value="ECO:0007669"/>
    <property type="project" value="UniProtKB-UniRule"/>
</dbReference>
<dbReference type="GO" id="GO:0072344">
    <property type="term" value="P:rescue of stalled ribosome"/>
    <property type="evidence" value="ECO:0007669"/>
    <property type="project" value="UniProtKB-UniRule"/>
</dbReference>
<dbReference type="CDD" id="cd00462">
    <property type="entry name" value="PTH"/>
    <property type="match status" value="1"/>
</dbReference>
<dbReference type="FunFam" id="3.40.50.1470:FF:000001">
    <property type="entry name" value="Peptidyl-tRNA hydrolase"/>
    <property type="match status" value="1"/>
</dbReference>
<dbReference type="Gene3D" id="3.40.50.1470">
    <property type="entry name" value="Peptidyl-tRNA hydrolase"/>
    <property type="match status" value="1"/>
</dbReference>
<dbReference type="HAMAP" id="MF_00083">
    <property type="entry name" value="Pept_tRNA_hydro_bact"/>
    <property type="match status" value="1"/>
</dbReference>
<dbReference type="InterPro" id="IPR001328">
    <property type="entry name" value="Pept_tRNA_hydro"/>
</dbReference>
<dbReference type="InterPro" id="IPR018171">
    <property type="entry name" value="Pept_tRNA_hydro_CS"/>
</dbReference>
<dbReference type="InterPro" id="IPR036416">
    <property type="entry name" value="Pept_tRNA_hydro_sf"/>
</dbReference>
<dbReference type="NCBIfam" id="TIGR00447">
    <property type="entry name" value="pth"/>
    <property type="match status" value="1"/>
</dbReference>
<dbReference type="PANTHER" id="PTHR17224">
    <property type="entry name" value="PEPTIDYL-TRNA HYDROLASE"/>
    <property type="match status" value="1"/>
</dbReference>
<dbReference type="PANTHER" id="PTHR17224:SF1">
    <property type="entry name" value="PEPTIDYL-TRNA HYDROLASE"/>
    <property type="match status" value="1"/>
</dbReference>
<dbReference type="Pfam" id="PF01195">
    <property type="entry name" value="Pept_tRNA_hydro"/>
    <property type="match status" value="1"/>
</dbReference>
<dbReference type="SUPFAM" id="SSF53178">
    <property type="entry name" value="Peptidyl-tRNA hydrolase-like"/>
    <property type="match status" value="1"/>
</dbReference>
<dbReference type="PROSITE" id="PS01195">
    <property type="entry name" value="PEPT_TRNA_HYDROL_1"/>
    <property type="match status" value="1"/>
</dbReference>
<dbReference type="PROSITE" id="PS01196">
    <property type="entry name" value="PEPT_TRNA_HYDROL_2"/>
    <property type="match status" value="1"/>
</dbReference>
<evidence type="ECO:0000255" key="1">
    <source>
        <dbReference type="HAMAP-Rule" id="MF_00083"/>
    </source>
</evidence>
<organism>
    <name type="scientific">Mycobacterium tuberculosis (strain ATCC 25177 / H37Ra)</name>
    <dbReference type="NCBI Taxonomy" id="419947"/>
    <lineage>
        <taxon>Bacteria</taxon>
        <taxon>Bacillati</taxon>
        <taxon>Actinomycetota</taxon>
        <taxon>Actinomycetes</taxon>
        <taxon>Mycobacteriales</taxon>
        <taxon>Mycobacteriaceae</taxon>
        <taxon>Mycobacterium</taxon>
        <taxon>Mycobacterium tuberculosis complex</taxon>
    </lineage>
</organism>
<protein>
    <recommendedName>
        <fullName evidence="1">Peptidyl-tRNA hydrolase</fullName>
        <shortName evidence="1">Pth</shortName>
        <ecNumber evidence="1">3.1.1.29</ecNumber>
    </recommendedName>
</protein>
<name>PTH_MYCTA</name>
<comment type="function">
    <text evidence="1">Hydrolyzes ribosome-free peptidyl-tRNAs (with 1 or more amino acids incorporated), which drop off the ribosome during protein synthesis, or as a result of ribosome stalling.</text>
</comment>
<comment type="function">
    <text evidence="1">Catalyzes the release of premature peptidyl moieties from peptidyl-tRNA molecules trapped in stalled 50S ribosomal subunits, and thus maintains levels of free tRNAs and 50S ribosomes.</text>
</comment>
<comment type="catalytic activity">
    <reaction evidence="1">
        <text>an N-acyl-L-alpha-aminoacyl-tRNA + H2O = an N-acyl-L-amino acid + a tRNA + H(+)</text>
        <dbReference type="Rhea" id="RHEA:54448"/>
        <dbReference type="Rhea" id="RHEA-COMP:10123"/>
        <dbReference type="Rhea" id="RHEA-COMP:13883"/>
        <dbReference type="ChEBI" id="CHEBI:15377"/>
        <dbReference type="ChEBI" id="CHEBI:15378"/>
        <dbReference type="ChEBI" id="CHEBI:59874"/>
        <dbReference type="ChEBI" id="CHEBI:78442"/>
        <dbReference type="ChEBI" id="CHEBI:138191"/>
        <dbReference type="EC" id="3.1.1.29"/>
    </reaction>
</comment>
<comment type="subunit">
    <text evidence="1">Monomer.</text>
</comment>
<comment type="subcellular location">
    <subcellularLocation>
        <location evidence="1">Cytoplasm</location>
    </subcellularLocation>
</comment>
<comment type="similarity">
    <text evidence="1">Belongs to the PTH family.</text>
</comment>
<reference key="1">
    <citation type="journal article" date="2008" name="PLoS ONE">
        <title>Genetic basis of virulence attenuation revealed by comparative genomic analysis of Mycobacterium tuberculosis strain H37Ra versus H37Rv.</title>
        <authorList>
            <person name="Zheng H."/>
            <person name="Lu L."/>
            <person name="Wang B."/>
            <person name="Pu S."/>
            <person name="Zhang X."/>
            <person name="Zhu G."/>
            <person name="Shi W."/>
            <person name="Zhang L."/>
            <person name="Wang H."/>
            <person name="Wang S."/>
            <person name="Zhao G."/>
            <person name="Zhang Y."/>
        </authorList>
    </citation>
    <scope>NUCLEOTIDE SEQUENCE [LARGE SCALE GENOMIC DNA]</scope>
    <source>
        <strain>ATCC 25177 / H37Ra</strain>
    </source>
</reference>
<keyword id="KW-0963">Cytoplasm</keyword>
<keyword id="KW-0378">Hydrolase</keyword>
<keyword id="KW-1185">Reference proteome</keyword>
<keyword id="KW-0694">RNA-binding</keyword>
<keyword id="KW-0820">tRNA-binding</keyword>
<gene>
    <name evidence="1" type="primary">pth</name>
    <name type="ordered locus">MRA_1022</name>
</gene>